<gene>
    <name evidence="1" type="primary">lepA</name>
    <name type="ordered locus">SAS1522</name>
</gene>
<reference key="1">
    <citation type="journal article" date="2004" name="Proc. Natl. Acad. Sci. U.S.A.">
        <title>Complete genomes of two clinical Staphylococcus aureus strains: evidence for the rapid evolution of virulence and drug resistance.</title>
        <authorList>
            <person name="Holden M.T.G."/>
            <person name="Feil E.J."/>
            <person name="Lindsay J.A."/>
            <person name="Peacock S.J."/>
            <person name="Day N.P.J."/>
            <person name="Enright M.C."/>
            <person name="Foster T.J."/>
            <person name="Moore C.E."/>
            <person name="Hurst L."/>
            <person name="Atkin R."/>
            <person name="Barron A."/>
            <person name="Bason N."/>
            <person name="Bentley S.D."/>
            <person name="Chillingworth C."/>
            <person name="Chillingworth T."/>
            <person name="Churcher C."/>
            <person name="Clark L."/>
            <person name="Corton C."/>
            <person name="Cronin A."/>
            <person name="Doggett J."/>
            <person name="Dowd L."/>
            <person name="Feltwell T."/>
            <person name="Hance Z."/>
            <person name="Harris B."/>
            <person name="Hauser H."/>
            <person name="Holroyd S."/>
            <person name="Jagels K."/>
            <person name="James K.D."/>
            <person name="Lennard N."/>
            <person name="Line A."/>
            <person name="Mayes R."/>
            <person name="Moule S."/>
            <person name="Mungall K."/>
            <person name="Ormond D."/>
            <person name="Quail M.A."/>
            <person name="Rabbinowitsch E."/>
            <person name="Rutherford K.M."/>
            <person name="Sanders M."/>
            <person name="Sharp S."/>
            <person name="Simmonds M."/>
            <person name="Stevens K."/>
            <person name="Whitehead S."/>
            <person name="Barrell B.G."/>
            <person name="Spratt B.G."/>
            <person name="Parkhill J."/>
        </authorList>
    </citation>
    <scope>NUCLEOTIDE SEQUENCE [LARGE SCALE GENOMIC DNA]</scope>
    <source>
        <strain>MSSA476</strain>
    </source>
</reference>
<dbReference type="EC" id="3.6.5.n1" evidence="1"/>
<dbReference type="EMBL" id="BX571857">
    <property type="protein sequence ID" value="CAG43323.1"/>
    <property type="molecule type" value="Genomic_DNA"/>
</dbReference>
<dbReference type="RefSeq" id="WP_000368338.1">
    <property type="nucleotide sequence ID" value="NC_002953.3"/>
</dbReference>
<dbReference type="SMR" id="Q6G8Y3"/>
<dbReference type="KEGG" id="sas:SAS1522"/>
<dbReference type="HOGENOM" id="CLU_009995_3_3_9"/>
<dbReference type="GO" id="GO:0005886">
    <property type="term" value="C:plasma membrane"/>
    <property type="evidence" value="ECO:0007669"/>
    <property type="project" value="UniProtKB-SubCell"/>
</dbReference>
<dbReference type="GO" id="GO:0005525">
    <property type="term" value="F:GTP binding"/>
    <property type="evidence" value="ECO:0007669"/>
    <property type="project" value="UniProtKB-UniRule"/>
</dbReference>
<dbReference type="GO" id="GO:0003924">
    <property type="term" value="F:GTPase activity"/>
    <property type="evidence" value="ECO:0007669"/>
    <property type="project" value="UniProtKB-UniRule"/>
</dbReference>
<dbReference type="GO" id="GO:0043022">
    <property type="term" value="F:ribosome binding"/>
    <property type="evidence" value="ECO:0007669"/>
    <property type="project" value="UniProtKB-UniRule"/>
</dbReference>
<dbReference type="GO" id="GO:0003746">
    <property type="term" value="F:translation elongation factor activity"/>
    <property type="evidence" value="ECO:0007669"/>
    <property type="project" value="UniProtKB-UniRule"/>
</dbReference>
<dbReference type="GO" id="GO:0045727">
    <property type="term" value="P:positive regulation of translation"/>
    <property type="evidence" value="ECO:0007669"/>
    <property type="project" value="UniProtKB-UniRule"/>
</dbReference>
<dbReference type="CDD" id="cd03699">
    <property type="entry name" value="EF4_II"/>
    <property type="match status" value="1"/>
</dbReference>
<dbReference type="CDD" id="cd16260">
    <property type="entry name" value="EF4_III"/>
    <property type="match status" value="1"/>
</dbReference>
<dbReference type="CDD" id="cd01890">
    <property type="entry name" value="LepA"/>
    <property type="match status" value="1"/>
</dbReference>
<dbReference type="CDD" id="cd03709">
    <property type="entry name" value="lepA_C"/>
    <property type="match status" value="1"/>
</dbReference>
<dbReference type="FunFam" id="3.40.50.300:FF:000078">
    <property type="entry name" value="Elongation factor 4"/>
    <property type="match status" value="1"/>
</dbReference>
<dbReference type="FunFam" id="2.40.30.10:FF:000015">
    <property type="entry name" value="Translation factor GUF1, mitochondrial"/>
    <property type="match status" value="1"/>
</dbReference>
<dbReference type="FunFam" id="3.30.70.240:FF:000007">
    <property type="entry name" value="Translation factor GUF1, mitochondrial"/>
    <property type="match status" value="1"/>
</dbReference>
<dbReference type="FunFam" id="3.30.70.2570:FF:000001">
    <property type="entry name" value="Translation factor GUF1, mitochondrial"/>
    <property type="match status" value="1"/>
</dbReference>
<dbReference type="FunFam" id="3.30.70.870:FF:000004">
    <property type="entry name" value="Translation factor GUF1, mitochondrial"/>
    <property type="match status" value="1"/>
</dbReference>
<dbReference type="Gene3D" id="3.30.70.240">
    <property type="match status" value="1"/>
</dbReference>
<dbReference type="Gene3D" id="3.30.70.2570">
    <property type="entry name" value="Elongation factor 4, C-terminal domain"/>
    <property type="match status" value="1"/>
</dbReference>
<dbReference type="Gene3D" id="3.30.70.870">
    <property type="entry name" value="Elongation Factor G (Translational Gtpase), domain 3"/>
    <property type="match status" value="1"/>
</dbReference>
<dbReference type="Gene3D" id="3.40.50.300">
    <property type="entry name" value="P-loop containing nucleotide triphosphate hydrolases"/>
    <property type="match status" value="1"/>
</dbReference>
<dbReference type="Gene3D" id="2.40.30.10">
    <property type="entry name" value="Translation factors"/>
    <property type="match status" value="1"/>
</dbReference>
<dbReference type="HAMAP" id="MF_00071">
    <property type="entry name" value="LepA"/>
    <property type="match status" value="1"/>
</dbReference>
<dbReference type="InterPro" id="IPR006297">
    <property type="entry name" value="EF-4"/>
</dbReference>
<dbReference type="InterPro" id="IPR035647">
    <property type="entry name" value="EFG_III/V"/>
</dbReference>
<dbReference type="InterPro" id="IPR000640">
    <property type="entry name" value="EFG_V-like"/>
</dbReference>
<dbReference type="InterPro" id="IPR004161">
    <property type="entry name" value="EFTu-like_2"/>
</dbReference>
<dbReference type="InterPro" id="IPR031157">
    <property type="entry name" value="G_TR_CS"/>
</dbReference>
<dbReference type="InterPro" id="IPR038363">
    <property type="entry name" value="LepA_C_sf"/>
</dbReference>
<dbReference type="InterPro" id="IPR013842">
    <property type="entry name" value="LepA_CTD"/>
</dbReference>
<dbReference type="InterPro" id="IPR035654">
    <property type="entry name" value="LepA_IV"/>
</dbReference>
<dbReference type="InterPro" id="IPR027417">
    <property type="entry name" value="P-loop_NTPase"/>
</dbReference>
<dbReference type="InterPro" id="IPR005225">
    <property type="entry name" value="Small_GTP-bd"/>
</dbReference>
<dbReference type="InterPro" id="IPR000795">
    <property type="entry name" value="T_Tr_GTP-bd_dom"/>
</dbReference>
<dbReference type="InterPro" id="IPR009000">
    <property type="entry name" value="Transl_B-barrel_sf"/>
</dbReference>
<dbReference type="NCBIfam" id="TIGR01393">
    <property type="entry name" value="lepA"/>
    <property type="match status" value="1"/>
</dbReference>
<dbReference type="NCBIfam" id="TIGR00231">
    <property type="entry name" value="small_GTP"/>
    <property type="match status" value="1"/>
</dbReference>
<dbReference type="PANTHER" id="PTHR43512:SF4">
    <property type="entry name" value="TRANSLATION FACTOR GUF1 HOMOLOG, CHLOROPLASTIC"/>
    <property type="match status" value="1"/>
</dbReference>
<dbReference type="PANTHER" id="PTHR43512">
    <property type="entry name" value="TRANSLATION FACTOR GUF1-RELATED"/>
    <property type="match status" value="1"/>
</dbReference>
<dbReference type="Pfam" id="PF00679">
    <property type="entry name" value="EFG_C"/>
    <property type="match status" value="1"/>
</dbReference>
<dbReference type="Pfam" id="PF00009">
    <property type="entry name" value="GTP_EFTU"/>
    <property type="match status" value="1"/>
</dbReference>
<dbReference type="Pfam" id="PF03144">
    <property type="entry name" value="GTP_EFTU_D2"/>
    <property type="match status" value="1"/>
</dbReference>
<dbReference type="Pfam" id="PF06421">
    <property type="entry name" value="LepA_C"/>
    <property type="match status" value="1"/>
</dbReference>
<dbReference type="PRINTS" id="PR00315">
    <property type="entry name" value="ELONGATNFCT"/>
</dbReference>
<dbReference type="SMART" id="SM00838">
    <property type="entry name" value="EFG_C"/>
    <property type="match status" value="1"/>
</dbReference>
<dbReference type="SUPFAM" id="SSF54980">
    <property type="entry name" value="EF-G C-terminal domain-like"/>
    <property type="match status" value="2"/>
</dbReference>
<dbReference type="SUPFAM" id="SSF52540">
    <property type="entry name" value="P-loop containing nucleoside triphosphate hydrolases"/>
    <property type="match status" value="1"/>
</dbReference>
<dbReference type="SUPFAM" id="SSF50447">
    <property type="entry name" value="Translation proteins"/>
    <property type="match status" value="1"/>
</dbReference>
<dbReference type="PROSITE" id="PS00301">
    <property type="entry name" value="G_TR_1"/>
    <property type="match status" value="1"/>
</dbReference>
<dbReference type="PROSITE" id="PS51722">
    <property type="entry name" value="G_TR_2"/>
    <property type="match status" value="1"/>
</dbReference>
<accession>Q6G8Y3</accession>
<proteinExistence type="inferred from homology"/>
<sequence>MDNEQRLKRRENIRNFSIIAHIDHGKSTLADRILENTKSVETRDMQDQLLDSMDLERERGITIKLNAVRLKYEAKDGNTYTFHLIDTPGHVDFTYEVSRSLAACEGAILVVDAAQGIEAQTLANVYLALDNELELLPVINKIDLPAAEPERVKQEIEDMIGLDQDDVVLASAKSNIGIEEILEKIVEVVPAPDGDPEAPLKALIFDSEYDPYRGVISSIRIVDGVVKAGDKIRMMATGKEFEVTEVGINTPKQLPVDELTVGDVGYIIASIKNVDDSRVGDTITLASRPASEPLQGYKKMNPMVYCGLFPIDNKNYNDLREALEKLQLNDASLEFEPESSQALGFGYRTGFLGMLHMEIIQERIEREFGIELIATAPSVIYQCILRDGSEVTVDNPAQMPDRDKIDKIFEPYVRATMMVPNDYVGAVMELCQRKRGQFINMDYLDDIRVNIVYELPLAEVVFDFFDQLKSNTKGYASFDYEFIENKESNLVKMDILLNGDKVDALSFIVHRDFAYERGKALVEKLKTLIPRQQFEVPVQAAIGQKIVARTNIKSMGKNVLAKCYGGDISRKRKLLEKQKAGKAKMKAVGNVEIPQDAFLAVLKMDDE</sequence>
<organism>
    <name type="scientific">Staphylococcus aureus (strain MSSA476)</name>
    <dbReference type="NCBI Taxonomy" id="282459"/>
    <lineage>
        <taxon>Bacteria</taxon>
        <taxon>Bacillati</taxon>
        <taxon>Bacillota</taxon>
        <taxon>Bacilli</taxon>
        <taxon>Bacillales</taxon>
        <taxon>Staphylococcaceae</taxon>
        <taxon>Staphylococcus</taxon>
    </lineage>
</organism>
<feature type="chain" id="PRO_0000176344" description="Elongation factor 4">
    <location>
        <begin position="1"/>
        <end position="607"/>
    </location>
</feature>
<feature type="domain" description="tr-type G">
    <location>
        <begin position="11"/>
        <end position="193"/>
    </location>
</feature>
<feature type="binding site" evidence="1">
    <location>
        <begin position="23"/>
        <end position="28"/>
    </location>
    <ligand>
        <name>GTP</name>
        <dbReference type="ChEBI" id="CHEBI:37565"/>
    </ligand>
</feature>
<feature type="binding site" evidence="1">
    <location>
        <begin position="140"/>
        <end position="143"/>
    </location>
    <ligand>
        <name>GTP</name>
        <dbReference type="ChEBI" id="CHEBI:37565"/>
    </ligand>
</feature>
<comment type="function">
    <text evidence="1">Required for accurate and efficient protein synthesis under certain stress conditions. May act as a fidelity factor of the translation reaction, by catalyzing a one-codon backward translocation of tRNAs on improperly translocated ribosomes. Back-translocation proceeds from a post-translocation (POST) complex to a pre-translocation (PRE) complex, thus giving elongation factor G a second chance to translocate the tRNAs correctly. Binds to ribosomes in a GTP-dependent manner.</text>
</comment>
<comment type="catalytic activity">
    <reaction evidence="1">
        <text>GTP + H2O = GDP + phosphate + H(+)</text>
        <dbReference type="Rhea" id="RHEA:19669"/>
        <dbReference type="ChEBI" id="CHEBI:15377"/>
        <dbReference type="ChEBI" id="CHEBI:15378"/>
        <dbReference type="ChEBI" id="CHEBI:37565"/>
        <dbReference type="ChEBI" id="CHEBI:43474"/>
        <dbReference type="ChEBI" id="CHEBI:58189"/>
        <dbReference type="EC" id="3.6.5.n1"/>
    </reaction>
</comment>
<comment type="subcellular location">
    <subcellularLocation>
        <location evidence="1">Cell membrane</location>
        <topology evidence="1">Peripheral membrane protein</topology>
        <orientation evidence="1">Cytoplasmic side</orientation>
    </subcellularLocation>
</comment>
<comment type="similarity">
    <text evidence="1">Belongs to the TRAFAC class translation factor GTPase superfamily. Classic translation factor GTPase family. LepA subfamily.</text>
</comment>
<name>LEPA_STAAS</name>
<evidence type="ECO:0000255" key="1">
    <source>
        <dbReference type="HAMAP-Rule" id="MF_00071"/>
    </source>
</evidence>
<protein>
    <recommendedName>
        <fullName evidence="1">Elongation factor 4</fullName>
        <shortName evidence="1">EF-4</shortName>
        <ecNumber evidence="1">3.6.5.n1</ecNumber>
    </recommendedName>
    <alternativeName>
        <fullName evidence="1">Ribosomal back-translocase LepA</fullName>
    </alternativeName>
</protein>
<keyword id="KW-1003">Cell membrane</keyword>
<keyword id="KW-0342">GTP-binding</keyword>
<keyword id="KW-0378">Hydrolase</keyword>
<keyword id="KW-0472">Membrane</keyword>
<keyword id="KW-0547">Nucleotide-binding</keyword>
<keyword id="KW-0648">Protein biosynthesis</keyword>